<protein>
    <recommendedName>
        <fullName>Putative export ATP-binding/permease protein RT0691</fullName>
        <ecNumber>7.-.-.-</ecNumber>
    </recommendedName>
</protein>
<reference key="1">
    <citation type="journal article" date="2004" name="J. Bacteriol.">
        <title>Complete genome sequence of Rickettsia typhi and comparison with sequences of other Rickettsiae.</title>
        <authorList>
            <person name="McLeod M.P."/>
            <person name="Qin X."/>
            <person name="Karpathy S.E."/>
            <person name="Gioia J."/>
            <person name="Highlander S.K."/>
            <person name="Fox G.E."/>
            <person name="McNeill T.Z."/>
            <person name="Jiang H."/>
            <person name="Muzny D."/>
            <person name="Jacob L.S."/>
            <person name="Hawes A.C."/>
            <person name="Sodergren E."/>
            <person name="Gill R."/>
            <person name="Hume J."/>
            <person name="Morgan M."/>
            <person name="Fan G."/>
            <person name="Amin A.G."/>
            <person name="Gibbs R.A."/>
            <person name="Hong C."/>
            <person name="Yu X.-J."/>
            <person name="Walker D.H."/>
            <person name="Weinstock G.M."/>
        </authorList>
    </citation>
    <scope>NUCLEOTIDE SEQUENCE [LARGE SCALE GENOMIC DNA]</scope>
    <source>
        <strain>ATCC VR-144 / Wilmington</strain>
    </source>
</reference>
<accession>Q68W42</accession>
<dbReference type="EC" id="7.-.-.-"/>
<dbReference type="EMBL" id="AE017197">
    <property type="protein sequence ID" value="AAU04150.1"/>
    <property type="molecule type" value="Genomic_DNA"/>
</dbReference>
<dbReference type="RefSeq" id="WP_011191127.1">
    <property type="nucleotide sequence ID" value="NC_006142.1"/>
</dbReference>
<dbReference type="SMR" id="Q68W42"/>
<dbReference type="KEGG" id="rty:RT0691"/>
<dbReference type="eggNOG" id="COG1132">
    <property type="taxonomic scope" value="Bacteria"/>
</dbReference>
<dbReference type="HOGENOM" id="CLU_000604_84_3_5"/>
<dbReference type="OrthoDB" id="9804259at2"/>
<dbReference type="Proteomes" id="UP000000604">
    <property type="component" value="Chromosome"/>
</dbReference>
<dbReference type="GO" id="GO:0005886">
    <property type="term" value="C:plasma membrane"/>
    <property type="evidence" value="ECO:0007669"/>
    <property type="project" value="UniProtKB-SubCell"/>
</dbReference>
<dbReference type="GO" id="GO:0015421">
    <property type="term" value="F:ABC-type oligopeptide transporter activity"/>
    <property type="evidence" value="ECO:0007669"/>
    <property type="project" value="TreeGrafter"/>
</dbReference>
<dbReference type="GO" id="GO:0005524">
    <property type="term" value="F:ATP binding"/>
    <property type="evidence" value="ECO:0007669"/>
    <property type="project" value="UniProtKB-KW"/>
</dbReference>
<dbReference type="GO" id="GO:0016887">
    <property type="term" value="F:ATP hydrolysis activity"/>
    <property type="evidence" value="ECO:0007669"/>
    <property type="project" value="InterPro"/>
</dbReference>
<dbReference type="CDD" id="cd18575">
    <property type="entry name" value="ABC_6TM_bac_exporter_ABCB8_10_like"/>
    <property type="match status" value="1"/>
</dbReference>
<dbReference type="FunFam" id="3.40.50.300:FF:000967">
    <property type="entry name" value="ABC multidrug transporter mdr4"/>
    <property type="match status" value="1"/>
</dbReference>
<dbReference type="Gene3D" id="1.20.1560.10">
    <property type="entry name" value="ABC transporter type 1, transmembrane domain"/>
    <property type="match status" value="1"/>
</dbReference>
<dbReference type="Gene3D" id="3.40.50.300">
    <property type="entry name" value="P-loop containing nucleotide triphosphate hydrolases"/>
    <property type="match status" value="1"/>
</dbReference>
<dbReference type="InterPro" id="IPR003593">
    <property type="entry name" value="AAA+_ATPase"/>
</dbReference>
<dbReference type="InterPro" id="IPR011527">
    <property type="entry name" value="ABC1_TM_dom"/>
</dbReference>
<dbReference type="InterPro" id="IPR036640">
    <property type="entry name" value="ABC1_TM_sf"/>
</dbReference>
<dbReference type="InterPro" id="IPR003439">
    <property type="entry name" value="ABC_transporter-like_ATP-bd"/>
</dbReference>
<dbReference type="InterPro" id="IPR017871">
    <property type="entry name" value="ABC_transporter-like_CS"/>
</dbReference>
<dbReference type="InterPro" id="IPR027417">
    <property type="entry name" value="P-loop_NTPase"/>
</dbReference>
<dbReference type="InterPro" id="IPR039421">
    <property type="entry name" value="Type_1_exporter"/>
</dbReference>
<dbReference type="PANTHER" id="PTHR43394:SF1">
    <property type="entry name" value="ATP-BINDING CASSETTE SUB-FAMILY B MEMBER 10, MITOCHONDRIAL"/>
    <property type="match status" value="1"/>
</dbReference>
<dbReference type="PANTHER" id="PTHR43394">
    <property type="entry name" value="ATP-DEPENDENT PERMEASE MDL1, MITOCHONDRIAL"/>
    <property type="match status" value="1"/>
</dbReference>
<dbReference type="Pfam" id="PF00664">
    <property type="entry name" value="ABC_membrane"/>
    <property type="match status" value="1"/>
</dbReference>
<dbReference type="Pfam" id="PF00005">
    <property type="entry name" value="ABC_tran"/>
    <property type="match status" value="1"/>
</dbReference>
<dbReference type="SMART" id="SM00382">
    <property type="entry name" value="AAA"/>
    <property type="match status" value="1"/>
</dbReference>
<dbReference type="SUPFAM" id="SSF90123">
    <property type="entry name" value="ABC transporter transmembrane region"/>
    <property type="match status" value="1"/>
</dbReference>
<dbReference type="SUPFAM" id="SSF52540">
    <property type="entry name" value="P-loop containing nucleoside triphosphate hydrolases"/>
    <property type="match status" value="1"/>
</dbReference>
<dbReference type="PROSITE" id="PS50929">
    <property type="entry name" value="ABC_TM1F"/>
    <property type="match status" value="1"/>
</dbReference>
<dbReference type="PROSITE" id="PS00211">
    <property type="entry name" value="ABC_TRANSPORTER_1"/>
    <property type="match status" value="1"/>
</dbReference>
<dbReference type="PROSITE" id="PS50893">
    <property type="entry name" value="ABC_TRANSPORTER_2"/>
    <property type="match status" value="1"/>
</dbReference>
<gene>
    <name type="ordered locus">RT0691</name>
</gene>
<keyword id="KW-0067">ATP-binding</keyword>
<keyword id="KW-0997">Cell inner membrane</keyword>
<keyword id="KW-1003">Cell membrane</keyword>
<keyword id="KW-0472">Membrane</keyword>
<keyword id="KW-0547">Nucleotide-binding</keyword>
<keyword id="KW-1278">Translocase</keyword>
<keyword id="KW-0812">Transmembrane</keyword>
<keyword id="KW-1133">Transmembrane helix</keyword>
<keyword id="KW-0813">Transport</keyword>
<feature type="chain" id="PRO_0000278659" description="Putative export ATP-binding/permease protein RT0691">
    <location>
        <begin position="1"/>
        <end position="576"/>
    </location>
</feature>
<feature type="transmembrane region" description="Helical" evidence="3">
    <location>
        <begin position="21"/>
        <end position="41"/>
    </location>
</feature>
<feature type="transmembrane region" description="Helical" evidence="3">
    <location>
        <begin position="61"/>
        <end position="81"/>
    </location>
</feature>
<feature type="transmembrane region" description="Helical" evidence="3">
    <location>
        <begin position="135"/>
        <end position="155"/>
    </location>
</feature>
<feature type="transmembrane region" description="Helical" evidence="3">
    <location>
        <begin position="158"/>
        <end position="178"/>
    </location>
</feature>
<feature type="transmembrane region" description="Helical" evidence="3">
    <location>
        <begin position="242"/>
        <end position="262"/>
    </location>
</feature>
<feature type="transmembrane region" description="Helical" evidence="3">
    <location>
        <begin position="277"/>
        <end position="297"/>
    </location>
</feature>
<feature type="domain" description="ABC transmembrane type-1" evidence="3">
    <location>
        <begin position="20"/>
        <end position="303"/>
    </location>
</feature>
<feature type="domain" description="ABC transporter" evidence="2">
    <location>
        <begin position="336"/>
        <end position="572"/>
    </location>
</feature>
<feature type="binding site" evidence="2">
    <location>
        <begin position="371"/>
        <end position="378"/>
    </location>
    <ligand>
        <name>ATP</name>
        <dbReference type="ChEBI" id="CHEBI:30616"/>
    </ligand>
</feature>
<name>Y691_RICTY</name>
<proteinExistence type="inferred from homology"/>
<sequence length="576" mass="64924">MDIKLLYRLAKYLRFYKKDLIIVMISLLSVSASLLLIGSVFRNLIDKGLAEDNILSVNKSILYICLLIVILSVASFFRSYFINNVAEKIVNQIRKEAYSNLINYEIEEYEELKIGDIISRLTNDIDQIATLIVNFLSFFIRNSVMLIGGITLMFFESFKLASIVIVTIPILLVPLIKFGKHVKSLSKKALESKSLLVSDIDETFNNIRVIYAFNHQINKISDFDTKLQSYLIYCKIRLKIRALFFAISIAVIFLTITLIVWIGASDIVQGDLSAGQIISFIYYAIIAGVSSGGIFELLSEIHLPTTALERIITIIDKISIVHNNYYALNNPDTVSIEFKNVDFTYNSRPNLKIINNMSLKINANKFVGIVGRSGAGKSTLIQLLLRFYRQDNGTILINNQDISRINPTDIRKFIAYVPQEASIFSDTIKSNIIFGNNKASDYEINEIIKITGIEEFSNKLHDGINTKIGEKGVRLSGGQKQRIAIARALLRKPKILLLDEAMSALDTMSEQKLLNAIKKIMKGNIIISIAHRISSIESADYILVIDKGKVVTAGSHYDLSKNSEIYRNICREQLTI</sequence>
<organism>
    <name type="scientific">Rickettsia typhi (strain ATCC VR-144 / Wilmington)</name>
    <dbReference type="NCBI Taxonomy" id="257363"/>
    <lineage>
        <taxon>Bacteria</taxon>
        <taxon>Pseudomonadati</taxon>
        <taxon>Pseudomonadota</taxon>
        <taxon>Alphaproteobacteria</taxon>
        <taxon>Rickettsiales</taxon>
        <taxon>Rickettsiaceae</taxon>
        <taxon>Rickettsieae</taxon>
        <taxon>Rickettsia</taxon>
        <taxon>typhus group</taxon>
    </lineage>
</organism>
<evidence type="ECO:0000250" key="1"/>
<evidence type="ECO:0000255" key="2">
    <source>
        <dbReference type="PROSITE-ProRule" id="PRU00434"/>
    </source>
</evidence>
<evidence type="ECO:0000255" key="3">
    <source>
        <dbReference type="PROSITE-ProRule" id="PRU00441"/>
    </source>
</evidence>
<evidence type="ECO:0000305" key="4"/>
<comment type="function">
    <text evidence="1">Part of an ABC transporter complex. Transmembrane domains (TMD) form a pore in the inner membrane and the ATP-binding domain (NBD) is responsible for energy generation (By similarity).</text>
</comment>
<comment type="subunit">
    <text evidence="1">Homodimer.</text>
</comment>
<comment type="subcellular location">
    <subcellularLocation>
        <location evidence="1">Cell inner membrane</location>
        <topology evidence="3">Multi-pass membrane protein</topology>
    </subcellularLocation>
</comment>
<comment type="domain">
    <text>The ATP-binding domain (NBD) and the transmembrane domain (TMD) are fused.</text>
</comment>
<comment type="similarity">
    <text evidence="4">Belongs to the ABC transporter superfamily.</text>
</comment>